<accession>Q65TC8</accession>
<keyword id="KW-0413">Isomerase</keyword>
<keyword id="KW-0819">tRNA processing</keyword>
<sequence length="263" mass="29955">MKIALGIEYNGKNYFGWQRQEKVHSVQAELEKALSFVANEKIEVFCAGRTDSGVHGTGQVVHFETNAIRPEKAWAFGTNANLPDDIAVRWAKEVPDDFHARFSATARRYRYVLYCNKLRSAILPYGITHTHLDLDEHKMQEAGRFLLGENDFSSFRAAQCQSNTPWRNIHHLNVIRRGNFVIVDIKANAFVHHMVRNIVGSLMEVGCGNQPPEWIEWLLAQKNRKLAAPTAKAEGLYLVQVTYPEHFELPQMPLGPLFLADEL</sequence>
<organism>
    <name type="scientific">Mannheimia succiniciproducens (strain KCTC 0769BP / MBEL55E)</name>
    <dbReference type="NCBI Taxonomy" id="221988"/>
    <lineage>
        <taxon>Bacteria</taxon>
        <taxon>Pseudomonadati</taxon>
        <taxon>Pseudomonadota</taxon>
        <taxon>Gammaproteobacteria</taxon>
        <taxon>Pasteurellales</taxon>
        <taxon>Pasteurellaceae</taxon>
        <taxon>Basfia</taxon>
    </lineage>
</organism>
<name>TRUA_MANSM</name>
<proteinExistence type="inferred from homology"/>
<protein>
    <recommendedName>
        <fullName evidence="1">tRNA pseudouridine synthase A</fullName>
        <ecNumber evidence="1">5.4.99.12</ecNumber>
    </recommendedName>
    <alternativeName>
        <fullName evidence="1">tRNA pseudouridine(38-40) synthase</fullName>
    </alternativeName>
    <alternativeName>
        <fullName evidence="1">tRNA pseudouridylate synthase I</fullName>
    </alternativeName>
    <alternativeName>
        <fullName evidence="1">tRNA-uridine isomerase I</fullName>
    </alternativeName>
</protein>
<evidence type="ECO:0000255" key="1">
    <source>
        <dbReference type="HAMAP-Rule" id="MF_00171"/>
    </source>
</evidence>
<evidence type="ECO:0000305" key="2"/>
<gene>
    <name evidence="1" type="primary">truA</name>
    <name type="ordered locus">MS1175</name>
</gene>
<comment type="function">
    <text evidence="1">Formation of pseudouridine at positions 38, 39 and 40 in the anticodon stem and loop of transfer RNAs.</text>
</comment>
<comment type="catalytic activity">
    <reaction evidence="1">
        <text>uridine(38/39/40) in tRNA = pseudouridine(38/39/40) in tRNA</text>
        <dbReference type="Rhea" id="RHEA:22376"/>
        <dbReference type="Rhea" id="RHEA-COMP:10085"/>
        <dbReference type="Rhea" id="RHEA-COMP:10087"/>
        <dbReference type="ChEBI" id="CHEBI:65314"/>
        <dbReference type="ChEBI" id="CHEBI:65315"/>
        <dbReference type="EC" id="5.4.99.12"/>
    </reaction>
</comment>
<comment type="subunit">
    <text evidence="1">Homodimer.</text>
</comment>
<comment type="similarity">
    <text evidence="1">Belongs to the tRNA pseudouridine synthase TruA family.</text>
</comment>
<comment type="sequence caution" evidence="2">
    <conflict type="erroneous initiation">
        <sequence resource="EMBL-CDS" id="AAU37782"/>
    </conflict>
</comment>
<feature type="chain" id="PRO_0000057405" description="tRNA pseudouridine synthase A">
    <location>
        <begin position="1"/>
        <end position="263"/>
    </location>
</feature>
<feature type="active site" description="Nucleophile" evidence="1">
    <location>
        <position position="51"/>
    </location>
</feature>
<feature type="binding site" evidence="1">
    <location>
        <position position="109"/>
    </location>
    <ligand>
        <name>substrate</name>
    </ligand>
</feature>
<reference key="1">
    <citation type="journal article" date="2004" name="Nat. Biotechnol.">
        <title>The genome sequence of the capnophilic rumen bacterium Mannheimia succiniciproducens.</title>
        <authorList>
            <person name="Hong S.H."/>
            <person name="Kim J.S."/>
            <person name="Lee S.Y."/>
            <person name="In Y.H."/>
            <person name="Choi S.S."/>
            <person name="Rih J.-K."/>
            <person name="Kim C.H."/>
            <person name="Jeong H."/>
            <person name="Hur C.G."/>
            <person name="Kim J.J."/>
        </authorList>
    </citation>
    <scope>NUCLEOTIDE SEQUENCE [LARGE SCALE GENOMIC DNA]</scope>
    <source>
        <strain>KCTC 0769BP / MBEL55E</strain>
    </source>
</reference>
<dbReference type="EC" id="5.4.99.12" evidence="1"/>
<dbReference type="EMBL" id="AE016827">
    <property type="protein sequence ID" value="AAU37782.1"/>
    <property type="status" value="ALT_INIT"/>
    <property type="molecule type" value="Genomic_DNA"/>
</dbReference>
<dbReference type="RefSeq" id="WP_041639748.1">
    <property type="nucleotide sequence ID" value="NC_006300.1"/>
</dbReference>
<dbReference type="SMR" id="Q65TC8"/>
<dbReference type="STRING" id="221988.MS1175"/>
<dbReference type="KEGG" id="msu:MS1175"/>
<dbReference type="eggNOG" id="COG0101">
    <property type="taxonomic scope" value="Bacteria"/>
</dbReference>
<dbReference type="HOGENOM" id="CLU_014673_0_2_6"/>
<dbReference type="OrthoDB" id="9811823at2"/>
<dbReference type="Proteomes" id="UP000000607">
    <property type="component" value="Chromosome"/>
</dbReference>
<dbReference type="GO" id="GO:0003723">
    <property type="term" value="F:RNA binding"/>
    <property type="evidence" value="ECO:0007669"/>
    <property type="project" value="InterPro"/>
</dbReference>
<dbReference type="GO" id="GO:0160147">
    <property type="term" value="F:tRNA pseudouridine(38-40) synthase activity"/>
    <property type="evidence" value="ECO:0007669"/>
    <property type="project" value="UniProtKB-EC"/>
</dbReference>
<dbReference type="GO" id="GO:0031119">
    <property type="term" value="P:tRNA pseudouridine synthesis"/>
    <property type="evidence" value="ECO:0007669"/>
    <property type="project" value="UniProtKB-UniRule"/>
</dbReference>
<dbReference type="CDD" id="cd02570">
    <property type="entry name" value="PseudoU_synth_EcTruA"/>
    <property type="match status" value="1"/>
</dbReference>
<dbReference type="FunFam" id="3.30.70.580:FF:000001">
    <property type="entry name" value="tRNA pseudouridine synthase A"/>
    <property type="match status" value="1"/>
</dbReference>
<dbReference type="FunFam" id="3.30.70.660:FF:000001">
    <property type="entry name" value="tRNA pseudouridine synthase A"/>
    <property type="match status" value="1"/>
</dbReference>
<dbReference type="Gene3D" id="3.30.70.660">
    <property type="entry name" value="Pseudouridine synthase I, catalytic domain, C-terminal subdomain"/>
    <property type="match status" value="1"/>
</dbReference>
<dbReference type="Gene3D" id="3.30.70.580">
    <property type="entry name" value="Pseudouridine synthase I, catalytic domain, N-terminal subdomain"/>
    <property type="match status" value="1"/>
</dbReference>
<dbReference type="HAMAP" id="MF_00171">
    <property type="entry name" value="TruA"/>
    <property type="match status" value="1"/>
</dbReference>
<dbReference type="InterPro" id="IPR020103">
    <property type="entry name" value="PsdUridine_synth_cat_dom_sf"/>
</dbReference>
<dbReference type="InterPro" id="IPR001406">
    <property type="entry name" value="PsdUridine_synth_TruA"/>
</dbReference>
<dbReference type="InterPro" id="IPR020097">
    <property type="entry name" value="PsdUridine_synth_TruA_a/b_dom"/>
</dbReference>
<dbReference type="InterPro" id="IPR020095">
    <property type="entry name" value="PsdUridine_synth_TruA_C"/>
</dbReference>
<dbReference type="InterPro" id="IPR020094">
    <property type="entry name" value="TruA/RsuA/RluB/E/F_N"/>
</dbReference>
<dbReference type="NCBIfam" id="TIGR00071">
    <property type="entry name" value="hisT_truA"/>
    <property type="match status" value="1"/>
</dbReference>
<dbReference type="PANTHER" id="PTHR11142">
    <property type="entry name" value="PSEUDOURIDYLATE SYNTHASE"/>
    <property type="match status" value="1"/>
</dbReference>
<dbReference type="PANTHER" id="PTHR11142:SF0">
    <property type="entry name" value="TRNA PSEUDOURIDINE SYNTHASE-LIKE 1"/>
    <property type="match status" value="1"/>
</dbReference>
<dbReference type="Pfam" id="PF01416">
    <property type="entry name" value="PseudoU_synth_1"/>
    <property type="match status" value="2"/>
</dbReference>
<dbReference type="PIRSF" id="PIRSF001430">
    <property type="entry name" value="tRNA_psdUrid_synth"/>
    <property type="match status" value="1"/>
</dbReference>
<dbReference type="SUPFAM" id="SSF55120">
    <property type="entry name" value="Pseudouridine synthase"/>
    <property type="match status" value="1"/>
</dbReference>